<keyword id="KW-0963">Cytoplasm</keyword>
<keyword id="KW-0238">DNA-binding</keyword>
<keyword id="KW-1185">Reference proteome</keyword>
<keyword id="KW-0677">Repeat</keyword>
<keyword id="KW-0804">Transcription</keyword>
<keyword id="KW-0805">Transcription regulation</keyword>
<reference key="1">
    <citation type="submission" date="2007-10" db="EMBL/GenBank/DDBJ databases">
        <title>Complete genome of Alkaliphilus oremlandii OhILAs.</title>
        <authorList>
            <person name="Copeland A."/>
            <person name="Lucas S."/>
            <person name="Lapidus A."/>
            <person name="Barry K."/>
            <person name="Detter J.C."/>
            <person name="Glavina del Rio T."/>
            <person name="Hammon N."/>
            <person name="Israni S."/>
            <person name="Dalin E."/>
            <person name="Tice H."/>
            <person name="Pitluck S."/>
            <person name="Chain P."/>
            <person name="Malfatti S."/>
            <person name="Shin M."/>
            <person name="Vergez L."/>
            <person name="Schmutz J."/>
            <person name="Larimer F."/>
            <person name="Land M."/>
            <person name="Hauser L."/>
            <person name="Kyrpides N."/>
            <person name="Mikhailova N."/>
            <person name="Stolz J.F."/>
            <person name="Dawson A."/>
            <person name="Fisher E."/>
            <person name="Crable B."/>
            <person name="Perera E."/>
            <person name="Lisak J."/>
            <person name="Ranganathan M."/>
            <person name="Basu P."/>
            <person name="Richardson P."/>
        </authorList>
    </citation>
    <scope>NUCLEOTIDE SEQUENCE [LARGE SCALE GENOMIC DNA]</scope>
    <source>
        <strain>OhILAs</strain>
    </source>
</reference>
<name>MRAZ_ALKOO</name>
<proteinExistence type="inferred from homology"/>
<organism>
    <name type="scientific">Alkaliphilus oremlandii (strain OhILAs)</name>
    <name type="common">Clostridium oremlandii (strain OhILAs)</name>
    <dbReference type="NCBI Taxonomy" id="350688"/>
    <lineage>
        <taxon>Bacteria</taxon>
        <taxon>Bacillati</taxon>
        <taxon>Bacillota</taxon>
        <taxon>Clostridia</taxon>
        <taxon>Peptostreptococcales</taxon>
        <taxon>Natronincolaceae</taxon>
        <taxon>Alkaliphilus</taxon>
    </lineage>
</organism>
<protein>
    <recommendedName>
        <fullName>Transcriptional regulator MraZ</fullName>
    </recommendedName>
</protein>
<comment type="subunit">
    <text evidence="1">Forms oligomers.</text>
</comment>
<comment type="subcellular location">
    <subcellularLocation>
        <location evidence="1">Cytoplasm</location>
        <location evidence="1">Nucleoid</location>
    </subcellularLocation>
</comment>
<comment type="similarity">
    <text evidence="1">Belongs to the MraZ family.</text>
</comment>
<dbReference type="EMBL" id="CP000853">
    <property type="protein sequence ID" value="ABW18914.1"/>
    <property type="molecule type" value="Genomic_DNA"/>
</dbReference>
<dbReference type="RefSeq" id="WP_012159226.1">
    <property type="nucleotide sequence ID" value="NC_009922.1"/>
</dbReference>
<dbReference type="SMR" id="A8MH27"/>
<dbReference type="STRING" id="350688.Clos_1370"/>
<dbReference type="KEGG" id="aoe:Clos_1370"/>
<dbReference type="eggNOG" id="COG2001">
    <property type="taxonomic scope" value="Bacteria"/>
</dbReference>
<dbReference type="HOGENOM" id="CLU_107907_0_5_9"/>
<dbReference type="OrthoDB" id="9807753at2"/>
<dbReference type="Proteomes" id="UP000000269">
    <property type="component" value="Chromosome"/>
</dbReference>
<dbReference type="GO" id="GO:0005737">
    <property type="term" value="C:cytoplasm"/>
    <property type="evidence" value="ECO:0007669"/>
    <property type="project" value="UniProtKB-UniRule"/>
</dbReference>
<dbReference type="GO" id="GO:0009295">
    <property type="term" value="C:nucleoid"/>
    <property type="evidence" value="ECO:0007669"/>
    <property type="project" value="UniProtKB-SubCell"/>
</dbReference>
<dbReference type="GO" id="GO:0003700">
    <property type="term" value="F:DNA-binding transcription factor activity"/>
    <property type="evidence" value="ECO:0007669"/>
    <property type="project" value="UniProtKB-UniRule"/>
</dbReference>
<dbReference type="GO" id="GO:0000976">
    <property type="term" value="F:transcription cis-regulatory region binding"/>
    <property type="evidence" value="ECO:0007669"/>
    <property type="project" value="TreeGrafter"/>
</dbReference>
<dbReference type="GO" id="GO:2000143">
    <property type="term" value="P:negative regulation of DNA-templated transcription initiation"/>
    <property type="evidence" value="ECO:0007669"/>
    <property type="project" value="TreeGrafter"/>
</dbReference>
<dbReference type="CDD" id="cd16321">
    <property type="entry name" value="MraZ_C"/>
    <property type="match status" value="1"/>
</dbReference>
<dbReference type="CDD" id="cd16320">
    <property type="entry name" value="MraZ_N"/>
    <property type="match status" value="1"/>
</dbReference>
<dbReference type="FunFam" id="3.40.1550.20:FF:000002">
    <property type="entry name" value="Transcriptional regulator MraZ"/>
    <property type="match status" value="1"/>
</dbReference>
<dbReference type="Gene3D" id="3.40.1550.20">
    <property type="entry name" value="Transcriptional regulator MraZ domain"/>
    <property type="match status" value="1"/>
</dbReference>
<dbReference type="HAMAP" id="MF_01008">
    <property type="entry name" value="MraZ"/>
    <property type="match status" value="1"/>
</dbReference>
<dbReference type="InterPro" id="IPR003444">
    <property type="entry name" value="MraZ"/>
</dbReference>
<dbReference type="InterPro" id="IPR035644">
    <property type="entry name" value="MraZ_C"/>
</dbReference>
<dbReference type="InterPro" id="IPR020603">
    <property type="entry name" value="MraZ_dom"/>
</dbReference>
<dbReference type="InterPro" id="IPR035642">
    <property type="entry name" value="MraZ_N"/>
</dbReference>
<dbReference type="InterPro" id="IPR038619">
    <property type="entry name" value="MraZ_sf"/>
</dbReference>
<dbReference type="InterPro" id="IPR007159">
    <property type="entry name" value="SpoVT-AbrB_dom"/>
</dbReference>
<dbReference type="InterPro" id="IPR037914">
    <property type="entry name" value="SpoVT-AbrB_sf"/>
</dbReference>
<dbReference type="NCBIfam" id="TIGR00242">
    <property type="entry name" value="division/cell wall cluster transcriptional repressor MraZ"/>
    <property type="match status" value="1"/>
</dbReference>
<dbReference type="PANTHER" id="PTHR34701">
    <property type="entry name" value="TRANSCRIPTIONAL REGULATOR MRAZ"/>
    <property type="match status" value="1"/>
</dbReference>
<dbReference type="PANTHER" id="PTHR34701:SF1">
    <property type="entry name" value="TRANSCRIPTIONAL REGULATOR MRAZ"/>
    <property type="match status" value="1"/>
</dbReference>
<dbReference type="Pfam" id="PF02381">
    <property type="entry name" value="MraZ"/>
    <property type="match status" value="2"/>
</dbReference>
<dbReference type="SUPFAM" id="SSF89447">
    <property type="entry name" value="AbrB/MazE/MraZ-like"/>
    <property type="match status" value="1"/>
</dbReference>
<dbReference type="PROSITE" id="PS51740">
    <property type="entry name" value="SPOVT_ABRB"/>
    <property type="match status" value="2"/>
</dbReference>
<feature type="chain" id="PRO_1000062843" description="Transcriptional regulator MraZ">
    <location>
        <begin position="1"/>
        <end position="143"/>
    </location>
</feature>
<feature type="domain" description="SpoVT-AbrB 1" evidence="2">
    <location>
        <begin position="5"/>
        <end position="47"/>
    </location>
</feature>
<feature type="domain" description="SpoVT-AbrB 2" evidence="2">
    <location>
        <begin position="76"/>
        <end position="119"/>
    </location>
</feature>
<gene>
    <name evidence="1" type="primary">mraZ</name>
    <name type="ordered locus">Clos_1370</name>
</gene>
<sequence length="143" mass="16389">MFIGEYNHAVDTKGRVSIPAKFREELGEHFILTKGLDNCLFIYSSDEWGILENKLKQLPMTNKDARAFVRFFFSGASECELDSQGRIRIPANLREHALLEKEAIIIGVGTRVEIWSNVEWEKYNSDDNLSYDEIANKMAELGI</sequence>
<evidence type="ECO:0000255" key="1">
    <source>
        <dbReference type="HAMAP-Rule" id="MF_01008"/>
    </source>
</evidence>
<evidence type="ECO:0000255" key="2">
    <source>
        <dbReference type="PROSITE-ProRule" id="PRU01076"/>
    </source>
</evidence>
<accession>A8MH27</accession>